<organism>
    <name type="scientific">Streptomyces griseus subsp. griseus (strain JCM 4626 / CBS 651.72 / NBRC 13350 / KCC S-0626 / ISP 5235)</name>
    <dbReference type="NCBI Taxonomy" id="455632"/>
    <lineage>
        <taxon>Bacteria</taxon>
        <taxon>Bacillati</taxon>
        <taxon>Actinomycetota</taxon>
        <taxon>Actinomycetes</taxon>
        <taxon>Kitasatosporales</taxon>
        <taxon>Streptomycetaceae</taxon>
        <taxon>Streptomyces</taxon>
    </lineage>
</organism>
<dbReference type="EMBL" id="AP009493">
    <property type="protein sequence ID" value="BAG19006.1"/>
    <property type="molecule type" value="Genomic_DNA"/>
</dbReference>
<dbReference type="RefSeq" id="WP_003966263.1">
    <property type="nucleotide sequence ID" value="NC_010572.1"/>
</dbReference>
<dbReference type="SMR" id="B1W0B7"/>
<dbReference type="GeneID" id="91370532"/>
<dbReference type="KEGG" id="sgr:SGR_2177"/>
<dbReference type="eggNOG" id="COG0254">
    <property type="taxonomic scope" value="Bacteria"/>
</dbReference>
<dbReference type="HOGENOM" id="CLU_114306_4_3_11"/>
<dbReference type="Proteomes" id="UP000001685">
    <property type="component" value="Chromosome"/>
</dbReference>
<dbReference type="GO" id="GO:1990904">
    <property type="term" value="C:ribonucleoprotein complex"/>
    <property type="evidence" value="ECO:0007669"/>
    <property type="project" value="UniProtKB-KW"/>
</dbReference>
<dbReference type="GO" id="GO:0005840">
    <property type="term" value="C:ribosome"/>
    <property type="evidence" value="ECO:0007669"/>
    <property type="project" value="UniProtKB-KW"/>
</dbReference>
<dbReference type="GO" id="GO:0046872">
    <property type="term" value="F:metal ion binding"/>
    <property type="evidence" value="ECO:0007669"/>
    <property type="project" value="UniProtKB-KW"/>
</dbReference>
<dbReference type="GO" id="GO:0019843">
    <property type="term" value="F:rRNA binding"/>
    <property type="evidence" value="ECO:0007669"/>
    <property type="project" value="UniProtKB-KW"/>
</dbReference>
<dbReference type="GO" id="GO:0003735">
    <property type="term" value="F:structural constituent of ribosome"/>
    <property type="evidence" value="ECO:0007669"/>
    <property type="project" value="InterPro"/>
</dbReference>
<dbReference type="GO" id="GO:0006412">
    <property type="term" value="P:translation"/>
    <property type="evidence" value="ECO:0007669"/>
    <property type="project" value="UniProtKB-UniRule"/>
</dbReference>
<dbReference type="Gene3D" id="4.10.830.30">
    <property type="entry name" value="Ribosomal protein L31"/>
    <property type="match status" value="1"/>
</dbReference>
<dbReference type="HAMAP" id="MF_00501">
    <property type="entry name" value="Ribosomal_bL31_1"/>
    <property type="match status" value="1"/>
</dbReference>
<dbReference type="InterPro" id="IPR034704">
    <property type="entry name" value="Ribosomal_bL28/bL31-like_sf"/>
</dbReference>
<dbReference type="InterPro" id="IPR002150">
    <property type="entry name" value="Ribosomal_bL31"/>
</dbReference>
<dbReference type="InterPro" id="IPR027491">
    <property type="entry name" value="Ribosomal_bL31_A"/>
</dbReference>
<dbReference type="InterPro" id="IPR042105">
    <property type="entry name" value="Ribosomal_bL31_sf"/>
</dbReference>
<dbReference type="NCBIfam" id="TIGR00105">
    <property type="entry name" value="L31"/>
    <property type="match status" value="1"/>
</dbReference>
<dbReference type="NCBIfam" id="NF000612">
    <property type="entry name" value="PRK00019.1"/>
    <property type="match status" value="1"/>
</dbReference>
<dbReference type="NCBIfam" id="NF001809">
    <property type="entry name" value="PRK00528.1"/>
    <property type="match status" value="1"/>
</dbReference>
<dbReference type="PANTHER" id="PTHR33280">
    <property type="entry name" value="50S RIBOSOMAL PROTEIN L31, CHLOROPLASTIC"/>
    <property type="match status" value="1"/>
</dbReference>
<dbReference type="PANTHER" id="PTHR33280:SF1">
    <property type="entry name" value="LARGE RIBOSOMAL SUBUNIT PROTEIN BL31C"/>
    <property type="match status" value="1"/>
</dbReference>
<dbReference type="Pfam" id="PF01197">
    <property type="entry name" value="Ribosomal_L31"/>
    <property type="match status" value="1"/>
</dbReference>
<dbReference type="PRINTS" id="PR01249">
    <property type="entry name" value="RIBOSOMALL31"/>
</dbReference>
<dbReference type="SUPFAM" id="SSF143800">
    <property type="entry name" value="L28p-like"/>
    <property type="match status" value="1"/>
</dbReference>
<dbReference type="PROSITE" id="PS01143">
    <property type="entry name" value="RIBOSOMAL_L31"/>
    <property type="match status" value="1"/>
</dbReference>
<comment type="function">
    <text evidence="1">Binds the 23S rRNA.</text>
</comment>
<comment type="cofactor">
    <cofactor evidence="1">
        <name>Zn(2+)</name>
        <dbReference type="ChEBI" id="CHEBI:29105"/>
    </cofactor>
    <text evidence="1">Binds 1 zinc ion per subunit.</text>
</comment>
<comment type="subunit">
    <text evidence="1">Part of the 50S ribosomal subunit.</text>
</comment>
<comment type="similarity">
    <text evidence="1">Belongs to the bacterial ribosomal protein bL31 family. Type A subfamily.</text>
</comment>
<protein>
    <recommendedName>
        <fullName evidence="1">Large ribosomal subunit protein bL31</fullName>
    </recommendedName>
    <alternativeName>
        <fullName evidence="2">50S ribosomal protein L31</fullName>
    </alternativeName>
</protein>
<gene>
    <name evidence="1" type="primary">rpmE</name>
    <name type="ordered locus">SGR_2177</name>
</gene>
<keyword id="KW-0479">Metal-binding</keyword>
<keyword id="KW-0687">Ribonucleoprotein</keyword>
<keyword id="KW-0689">Ribosomal protein</keyword>
<keyword id="KW-0694">RNA-binding</keyword>
<keyword id="KW-0699">rRNA-binding</keyword>
<keyword id="KW-0862">Zinc</keyword>
<sequence>MKRDIHPEYVETQVSCTCGASFTTRSTIDNGTIRADVCSECHPFYTGKQKILDTGGRVARFEARFGKAAGSASK</sequence>
<accession>B1W0B7</accession>
<reference key="1">
    <citation type="journal article" date="2008" name="J. Bacteriol.">
        <title>Genome sequence of the streptomycin-producing microorganism Streptomyces griseus IFO 13350.</title>
        <authorList>
            <person name="Ohnishi Y."/>
            <person name="Ishikawa J."/>
            <person name="Hara H."/>
            <person name="Suzuki H."/>
            <person name="Ikenoya M."/>
            <person name="Ikeda H."/>
            <person name="Yamashita A."/>
            <person name="Hattori M."/>
            <person name="Horinouchi S."/>
        </authorList>
    </citation>
    <scope>NUCLEOTIDE SEQUENCE [LARGE SCALE GENOMIC DNA]</scope>
    <source>
        <strain>JCM 4626 / CBS 651.72 / NBRC 13350 / KCC S-0626 / ISP 5235</strain>
    </source>
</reference>
<evidence type="ECO:0000255" key="1">
    <source>
        <dbReference type="HAMAP-Rule" id="MF_00501"/>
    </source>
</evidence>
<evidence type="ECO:0000305" key="2"/>
<proteinExistence type="inferred from homology"/>
<feature type="chain" id="PRO_1000126745" description="Large ribosomal subunit protein bL31">
    <location>
        <begin position="1"/>
        <end position="74"/>
    </location>
</feature>
<feature type="binding site" evidence="1">
    <location>
        <position position="16"/>
    </location>
    <ligand>
        <name>Zn(2+)</name>
        <dbReference type="ChEBI" id="CHEBI:29105"/>
    </ligand>
</feature>
<feature type="binding site" evidence="1">
    <location>
        <position position="18"/>
    </location>
    <ligand>
        <name>Zn(2+)</name>
        <dbReference type="ChEBI" id="CHEBI:29105"/>
    </ligand>
</feature>
<feature type="binding site" evidence="1">
    <location>
        <position position="38"/>
    </location>
    <ligand>
        <name>Zn(2+)</name>
        <dbReference type="ChEBI" id="CHEBI:29105"/>
    </ligand>
</feature>
<feature type="binding site" evidence="1">
    <location>
        <position position="41"/>
    </location>
    <ligand>
        <name>Zn(2+)</name>
        <dbReference type="ChEBI" id="CHEBI:29105"/>
    </ligand>
</feature>
<name>RL31_STRGG</name>